<protein>
    <recommendedName>
        <fullName evidence="1">Photosystem I P700 chlorophyll a apoprotein A1</fullName>
        <ecNumber evidence="1">1.97.1.12</ecNumber>
    </recommendedName>
    <alternativeName>
        <fullName evidence="1">PSI-A</fullName>
    </alternativeName>
    <alternativeName>
        <fullName evidence="1">PsaA</fullName>
    </alternativeName>
</protein>
<proteinExistence type="inferred from homology"/>
<organism>
    <name type="scientific">Nasturtium officinale</name>
    <name type="common">Watercress</name>
    <name type="synonym">Rorippa nasturtium-aquaticum</name>
    <dbReference type="NCBI Taxonomy" id="65948"/>
    <lineage>
        <taxon>Eukaryota</taxon>
        <taxon>Viridiplantae</taxon>
        <taxon>Streptophyta</taxon>
        <taxon>Embryophyta</taxon>
        <taxon>Tracheophyta</taxon>
        <taxon>Spermatophyta</taxon>
        <taxon>Magnoliopsida</taxon>
        <taxon>eudicotyledons</taxon>
        <taxon>Gunneridae</taxon>
        <taxon>Pentapetalae</taxon>
        <taxon>rosids</taxon>
        <taxon>malvids</taxon>
        <taxon>Brassicales</taxon>
        <taxon>Brassicaceae</taxon>
        <taxon>Cardamineae</taxon>
        <taxon>Nasturtium</taxon>
    </lineage>
</organism>
<gene>
    <name evidence="1" type="primary">psaA</name>
</gene>
<reference key="1">
    <citation type="submission" date="2007-03" db="EMBL/GenBank/DDBJ databases">
        <title>Sequencing analysis of Nasturtium officinale chloroplast DNA.</title>
        <authorList>
            <person name="Hosouchi T."/>
            <person name="Tsuruoka H."/>
            <person name="Kotani H."/>
        </authorList>
    </citation>
    <scope>NUCLEOTIDE SEQUENCE [LARGE SCALE GENOMIC DNA]</scope>
</reference>
<evidence type="ECO:0000255" key="1">
    <source>
        <dbReference type="HAMAP-Rule" id="MF_00458"/>
    </source>
</evidence>
<keyword id="KW-0004">4Fe-4S</keyword>
<keyword id="KW-0148">Chlorophyll</keyword>
<keyword id="KW-0150">Chloroplast</keyword>
<keyword id="KW-0157">Chromophore</keyword>
<keyword id="KW-0249">Electron transport</keyword>
<keyword id="KW-0408">Iron</keyword>
<keyword id="KW-0411">Iron-sulfur</keyword>
<keyword id="KW-0460">Magnesium</keyword>
<keyword id="KW-0472">Membrane</keyword>
<keyword id="KW-0479">Metal-binding</keyword>
<keyword id="KW-0560">Oxidoreductase</keyword>
<keyword id="KW-0602">Photosynthesis</keyword>
<keyword id="KW-0603">Photosystem I</keyword>
<keyword id="KW-0934">Plastid</keyword>
<keyword id="KW-0793">Thylakoid</keyword>
<keyword id="KW-0812">Transmembrane</keyword>
<keyword id="KW-1133">Transmembrane helix</keyword>
<keyword id="KW-0813">Transport</keyword>
<feature type="chain" id="PRO_0000294226" description="Photosystem I P700 chlorophyll a apoprotein A1">
    <location>
        <begin position="1"/>
        <end position="750"/>
    </location>
</feature>
<feature type="transmembrane region" description="Helical; Name=I" evidence="1">
    <location>
        <begin position="70"/>
        <end position="93"/>
    </location>
</feature>
<feature type="transmembrane region" description="Helical; Name=II" evidence="1">
    <location>
        <begin position="156"/>
        <end position="179"/>
    </location>
</feature>
<feature type="transmembrane region" description="Helical; Name=III" evidence="1">
    <location>
        <begin position="195"/>
        <end position="219"/>
    </location>
</feature>
<feature type="transmembrane region" description="Helical; Name=IV" evidence="1">
    <location>
        <begin position="291"/>
        <end position="309"/>
    </location>
</feature>
<feature type="transmembrane region" description="Helical; Name=V" evidence="1">
    <location>
        <begin position="346"/>
        <end position="369"/>
    </location>
</feature>
<feature type="transmembrane region" description="Helical; Name=VI" evidence="1">
    <location>
        <begin position="385"/>
        <end position="411"/>
    </location>
</feature>
<feature type="transmembrane region" description="Helical; Name=VII" evidence="1">
    <location>
        <begin position="433"/>
        <end position="455"/>
    </location>
</feature>
<feature type="transmembrane region" description="Helical; Name=VIII" evidence="1">
    <location>
        <begin position="531"/>
        <end position="549"/>
    </location>
</feature>
<feature type="transmembrane region" description="Helical; Name=IX" evidence="1">
    <location>
        <begin position="589"/>
        <end position="610"/>
    </location>
</feature>
<feature type="transmembrane region" description="Helical; Name=X" evidence="1">
    <location>
        <begin position="664"/>
        <end position="686"/>
    </location>
</feature>
<feature type="transmembrane region" description="Helical; Name=XI" evidence="1">
    <location>
        <begin position="724"/>
        <end position="744"/>
    </location>
</feature>
<feature type="binding site" evidence="1">
    <location>
        <position position="573"/>
    </location>
    <ligand>
        <name>[4Fe-4S] cluster</name>
        <dbReference type="ChEBI" id="CHEBI:49883"/>
        <note>ligand shared between dimeric partners</note>
    </ligand>
</feature>
<feature type="binding site" evidence="1">
    <location>
        <position position="582"/>
    </location>
    <ligand>
        <name>[4Fe-4S] cluster</name>
        <dbReference type="ChEBI" id="CHEBI:49883"/>
        <note>ligand shared between dimeric partners</note>
    </ligand>
</feature>
<feature type="binding site" description="axial binding residue" evidence="1">
    <location>
        <position position="675"/>
    </location>
    <ligand>
        <name>chlorophyll a'</name>
        <dbReference type="ChEBI" id="CHEBI:189419"/>
        <label>A1</label>
    </ligand>
    <ligandPart>
        <name>Mg</name>
        <dbReference type="ChEBI" id="CHEBI:25107"/>
    </ligandPart>
</feature>
<feature type="binding site" description="axial binding residue" evidence="1">
    <location>
        <position position="683"/>
    </location>
    <ligand>
        <name>chlorophyll a</name>
        <dbReference type="ChEBI" id="CHEBI:58416"/>
        <label>A3</label>
    </ligand>
    <ligandPart>
        <name>Mg</name>
        <dbReference type="ChEBI" id="CHEBI:25107"/>
    </ligandPart>
</feature>
<feature type="binding site" evidence="1">
    <location>
        <position position="691"/>
    </location>
    <ligand>
        <name>chlorophyll a</name>
        <dbReference type="ChEBI" id="CHEBI:58416"/>
        <label>A3</label>
    </ligand>
</feature>
<feature type="binding site" evidence="1">
    <location>
        <position position="692"/>
    </location>
    <ligand>
        <name>phylloquinone</name>
        <dbReference type="ChEBI" id="CHEBI:18067"/>
        <label>A</label>
    </ligand>
</feature>
<comment type="function">
    <text>PsaA and PsaB bind P700, the primary electron donor of photosystem I (PSI), as well as the electron acceptors A0, A1 and FX. PSI is a plastocyanin-ferredoxin oxidoreductase, converting photonic excitation into a charge separation, which transfers an electron from the donor P700 chlorophyll pair to the spectroscopically characterized acceptors A0, A1, FX, FA and FB in turn. Oxidized P700 is reduced on the lumenal side of the thylakoid membrane by plastocyanin.</text>
</comment>
<comment type="catalytic activity">
    <reaction evidence="1">
        <text>reduced [plastocyanin] + hnu + oxidized [2Fe-2S]-[ferredoxin] = oxidized [plastocyanin] + reduced [2Fe-2S]-[ferredoxin]</text>
        <dbReference type="Rhea" id="RHEA:30407"/>
        <dbReference type="Rhea" id="RHEA-COMP:10000"/>
        <dbReference type="Rhea" id="RHEA-COMP:10001"/>
        <dbReference type="Rhea" id="RHEA-COMP:10039"/>
        <dbReference type="Rhea" id="RHEA-COMP:10040"/>
        <dbReference type="ChEBI" id="CHEBI:29036"/>
        <dbReference type="ChEBI" id="CHEBI:30212"/>
        <dbReference type="ChEBI" id="CHEBI:33737"/>
        <dbReference type="ChEBI" id="CHEBI:33738"/>
        <dbReference type="ChEBI" id="CHEBI:49552"/>
        <dbReference type="EC" id="1.97.1.12"/>
    </reaction>
</comment>
<comment type="cofactor">
    <text evidence="1">P700 is a chlorophyll a/chlorophyll a' dimer, A0 is one or more chlorophyll a, A1 is one or both phylloquinones and FX is a shared 4Fe-4S iron-sulfur center.</text>
</comment>
<comment type="subunit">
    <text evidence="1">The PsaA/B heterodimer binds the P700 chlorophyll special pair and subsequent electron acceptors. PSI consists of a core antenna complex that captures photons, and an electron transfer chain that converts photonic excitation into a charge separation. The eukaryotic PSI reaction center is composed of at least 11 subunits.</text>
</comment>
<comment type="subcellular location">
    <subcellularLocation>
        <location evidence="1">Plastid</location>
        <location evidence="1">Chloroplast thylakoid membrane</location>
        <topology evidence="1">Multi-pass membrane protein</topology>
    </subcellularLocation>
</comment>
<comment type="similarity">
    <text evidence="1">Belongs to the PsaA/PsaB family.</text>
</comment>
<sequence>MIIRSPEPEVKILVDRDPIKTSFEEWAKPGHFSRTIAKGPDTTTWIWNLHADAHDFDSHTSDLEEISRKVFSAHFGQLSIIFLWLSGMYFHGARFSNYEAWLSDPTHIGPSAQVVWPIVGQEILNGDVGGGFRGIQITSGFFQIWRASGITSELQLYCTAIGALVFAALMLFAGWFHYHKAAPKLAWFQDVESMLNHHLAGLLGLGSLSWAGHQVHVSLPINQFLNAGVDPKEIPLPHEFILNRDLLAQLYPSFAEGATPFFTLNWSKYSEFLTFRGGLDPVTGGLWLTDIAHHHLAIAILFLIAGHMYRTNWGIGHGIKDILEAHKGPFTGQGHKGLYEILTTLWHAQLSLNLAMLGSLTIVVAHHMYSMPPYPYLATDYATQLSLFTHHMWIGGFLIVGAAAHAAIFMVRDYDPTNRYNDLLDRVLRHRDAIISHLNWVCIFLGFHSFGLYIHNDTMSALGRPQDMFSDTAIQLQPVFAQWIQNTHALAPGVTAPGETASTSLTWGGGELVAVGGKVALLPIPLGTADFLVHHIHAFTIHVTVLILLKGVLFARSSRLIPDKANLGFRFPCDGPGRGGTCQVSAWDHVFLGLFWMYNAISVVIFHFSWKMQSDVWGSISDQGVVTHITGGNFAQSSITINGWLRDFLWAQASQVIQSYGSSLSAYGLFFLGAHFVWAFSLMFLFSGRGYWQELIESIVWAHNKLKVAPATQPRALSIVQGRAVGVTHYLLGGIATTWAFFLARIIAVG</sequence>
<name>PSAA_NASOF</name>
<geneLocation type="chloroplast"/>
<accession>A4QLT3</accession>
<dbReference type="EC" id="1.97.1.12" evidence="1"/>
<dbReference type="EMBL" id="AP009376">
    <property type="protein sequence ID" value="BAF50638.1"/>
    <property type="molecule type" value="Genomic_DNA"/>
</dbReference>
<dbReference type="RefSeq" id="YP_001123814.1">
    <property type="nucleotide sequence ID" value="NC_009275.1"/>
</dbReference>
<dbReference type="SMR" id="A4QLT3"/>
<dbReference type="GeneID" id="4962095"/>
<dbReference type="GO" id="GO:0009535">
    <property type="term" value="C:chloroplast thylakoid membrane"/>
    <property type="evidence" value="ECO:0007669"/>
    <property type="project" value="UniProtKB-SubCell"/>
</dbReference>
<dbReference type="GO" id="GO:0009522">
    <property type="term" value="C:photosystem I"/>
    <property type="evidence" value="ECO:0007669"/>
    <property type="project" value="UniProtKB-KW"/>
</dbReference>
<dbReference type="GO" id="GO:0051539">
    <property type="term" value="F:4 iron, 4 sulfur cluster binding"/>
    <property type="evidence" value="ECO:0007669"/>
    <property type="project" value="UniProtKB-KW"/>
</dbReference>
<dbReference type="GO" id="GO:0016168">
    <property type="term" value="F:chlorophyll binding"/>
    <property type="evidence" value="ECO:0007669"/>
    <property type="project" value="UniProtKB-KW"/>
</dbReference>
<dbReference type="GO" id="GO:0009055">
    <property type="term" value="F:electron transfer activity"/>
    <property type="evidence" value="ECO:0007669"/>
    <property type="project" value="UniProtKB-UniRule"/>
</dbReference>
<dbReference type="GO" id="GO:0000287">
    <property type="term" value="F:magnesium ion binding"/>
    <property type="evidence" value="ECO:0007669"/>
    <property type="project" value="UniProtKB-UniRule"/>
</dbReference>
<dbReference type="GO" id="GO:0016491">
    <property type="term" value="F:oxidoreductase activity"/>
    <property type="evidence" value="ECO:0007669"/>
    <property type="project" value="UniProtKB-KW"/>
</dbReference>
<dbReference type="GO" id="GO:0015979">
    <property type="term" value="P:photosynthesis"/>
    <property type="evidence" value="ECO:0007669"/>
    <property type="project" value="UniProtKB-UniRule"/>
</dbReference>
<dbReference type="FunFam" id="1.20.1130.10:FF:000001">
    <property type="entry name" value="Photosystem I P700 chlorophyll a apoprotein A2"/>
    <property type="match status" value="1"/>
</dbReference>
<dbReference type="Gene3D" id="1.20.1130.10">
    <property type="entry name" value="Photosystem I PsaA/PsaB"/>
    <property type="match status" value="1"/>
</dbReference>
<dbReference type="HAMAP" id="MF_00458">
    <property type="entry name" value="PSI_PsaA"/>
    <property type="match status" value="1"/>
</dbReference>
<dbReference type="InterPro" id="IPR006243">
    <property type="entry name" value="PSI_PsaA"/>
</dbReference>
<dbReference type="InterPro" id="IPR001280">
    <property type="entry name" value="PSI_PsaA/B"/>
</dbReference>
<dbReference type="InterPro" id="IPR020586">
    <property type="entry name" value="PSI_PsaA/B_CS"/>
</dbReference>
<dbReference type="InterPro" id="IPR036408">
    <property type="entry name" value="PSI_PsaA/B_sf"/>
</dbReference>
<dbReference type="NCBIfam" id="TIGR01335">
    <property type="entry name" value="psaA"/>
    <property type="match status" value="1"/>
</dbReference>
<dbReference type="PANTHER" id="PTHR30128">
    <property type="entry name" value="OUTER MEMBRANE PROTEIN, OMPA-RELATED"/>
    <property type="match status" value="1"/>
</dbReference>
<dbReference type="PANTHER" id="PTHR30128:SF19">
    <property type="entry name" value="PHOTOSYSTEM I P700 CHLOROPHYLL A APOPROTEIN A1-RELATED"/>
    <property type="match status" value="1"/>
</dbReference>
<dbReference type="Pfam" id="PF00223">
    <property type="entry name" value="PsaA_PsaB"/>
    <property type="match status" value="1"/>
</dbReference>
<dbReference type="PIRSF" id="PIRSF002905">
    <property type="entry name" value="PSI_A"/>
    <property type="match status" value="1"/>
</dbReference>
<dbReference type="PRINTS" id="PR00257">
    <property type="entry name" value="PHOTSYSPSAAB"/>
</dbReference>
<dbReference type="SUPFAM" id="SSF81558">
    <property type="entry name" value="Photosystem I subunits PsaA/PsaB"/>
    <property type="match status" value="1"/>
</dbReference>
<dbReference type="PROSITE" id="PS00419">
    <property type="entry name" value="PHOTOSYSTEM_I_PSAAB"/>
    <property type="match status" value="1"/>
</dbReference>